<proteinExistence type="inferred from homology"/>
<sequence>MMTTPSTPLYRLEGVGKEYDGPGEELVILKGLDLTIEAGESVAIVGASGSGKSTLLHLLGALDTPTWGKLHFLDRDMGAMSPEEKAAFRNREIGFVFQFHHLLPEFSTVENVAMQAIISGMPHAEAYGLAREALDKVGLSGRVEHKVTTLSGGERQRAAIARAILLRPRVLLADEPTGNLDERTGDVVGRMLLDLNRELGMTLIVVTHNRELADLMGRRLELRAGELYDQHRP</sequence>
<evidence type="ECO:0000255" key="1">
    <source>
        <dbReference type="HAMAP-Rule" id="MF_01708"/>
    </source>
</evidence>
<comment type="function">
    <text evidence="1">Part of the ABC transporter complex LolCDE involved in the translocation of mature outer membrane-directed lipoproteins, from the inner membrane to the periplasmic chaperone, LolA. Responsible for the formation of the LolA-lipoprotein complex in an ATP-dependent manner.</text>
</comment>
<comment type="subunit">
    <text evidence="1">The complex is composed of two ATP-binding proteins (LolD) and two transmembrane proteins (LolC and LolE).</text>
</comment>
<comment type="subcellular location">
    <subcellularLocation>
        <location evidence="1">Cell inner membrane</location>
        <topology evidence="1">Peripheral membrane protein</topology>
    </subcellularLocation>
</comment>
<comment type="similarity">
    <text evidence="1">Belongs to the ABC transporter superfamily. Lipoprotein translocase (TC 3.A.1.125) family.</text>
</comment>
<gene>
    <name evidence="1" type="primary">lolD</name>
    <name type="ordered locus">DVU_2374</name>
</gene>
<keyword id="KW-0067">ATP-binding</keyword>
<keyword id="KW-0997">Cell inner membrane</keyword>
<keyword id="KW-1003">Cell membrane</keyword>
<keyword id="KW-0472">Membrane</keyword>
<keyword id="KW-0547">Nucleotide-binding</keyword>
<keyword id="KW-1185">Reference proteome</keyword>
<keyword id="KW-1278">Translocase</keyword>
<keyword id="KW-0813">Transport</keyword>
<protein>
    <recommendedName>
        <fullName evidence="1">Lipoprotein-releasing system ATP-binding protein LolD</fullName>
        <ecNumber evidence="1">7.6.2.-</ecNumber>
    </recommendedName>
</protein>
<name>LOLD_NITV2</name>
<feature type="chain" id="PRO_0000272077" description="Lipoprotein-releasing system ATP-binding protein LolD">
    <location>
        <begin position="1"/>
        <end position="233"/>
    </location>
</feature>
<feature type="domain" description="ABC transporter" evidence="1">
    <location>
        <begin position="10"/>
        <end position="233"/>
    </location>
</feature>
<feature type="binding site" evidence="1">
    <location>
        <begin position="46"/>
        <end position="53"/>
    </location>
    <ligand>
        <name>ATP</name>
        <dbReference type="ChEBI" id="CHEBI:30616"/>
    </ligand>
</feature>
<reference key="1">
    <citation type="journal article" date="2004" name="Nat. Biotechnol.">
        <title>The genome sequence of the anaerobic, sulfate-reducing bacterium Desulfovibrio vulgaris Hildenborough.</title>
        <authorList>
            <person name="Heidelberg J.F."/>
            <person name="Seshadri R."/>
            <person name="Haveman S.A."/>
            <person name="Hemme C.L."/>
            <person name="Paulsen I.T."/>
            <person name="Kolonay J.F."/>
            <person name="Eisen J.A."/>
            <person name="Ward N.L."/>
            <person name="Methe B.A."/>
            <person name="Brinkac L.M."/>
            <person name="Daugherty S.C."/>
            <person name="DeBoy R.T."/>
            <person name="Dodson R.J."/>
            <person name="Durkin A.S."/>
            <person name="Madupu R."/>
            <person name="Nelson W.C."/>
            <person name="Sullivan S.A."/>
            <person name="Fouts D.E."/>
            <person name="Haft D.H."/>
            <person name="Selengut J."/>
            <person name="Peterson J.D."/>
            <person name="Davidsen T.M."/>
            <person name="Zafar N."/>
            <person name="Zhou L."/>
            <person name="Radune D."/>
            <person name="Dimitrov G."/>
            <person name="Hance M."/>
            <person name="Tran K."/>
            <person name="Khouri H.M."/>
            <person name="Gill J."/>
            <person name="Utterback T.R."/>
            <person name="Feldblyum T.V."/>
            <person name="Wall J.D."/>
            <person name="Voordouw G."/>
            <person name="Fraser C.M."/>
        </authorList>
    </citation>
    <scope>NUCLEOTIDE SEQUENCE [LARGE SCALE GENOMIC DNA]</scope>
    <source>
        <strain>ATCC 29579 / DSM 644 / CCUG 34227 / NCIMB 8303 / VKM B-1760 / Hildenborough</strain>
    </source>
</reference>
<accession>Q729H7</accession>
<organism>
    <name type="scientific">Nitratidesulfovibrio vulgaris (strain ATCC 29579 / DSM 644 / CCUG 34227 / NCIMB 8303 / VKM B-1760 / Hildenborough)</name>
    <name type="common">Desulfovibrio vulgaris</name>
    <dbReference type="NCBI Taxonomy" id="882"/>
    <lineage>
        <taxon>Bacteria</taxon>
        <taxon>Pseudomonadati</taxon>
        <taxon>Thermodesulfobacteriota</taxon>
        <taxon>Desulfovibrionia</taxon>
        <taxon>Desulfovibrionales</taxon>
        <taxon>Desulfovibrionaceae</taxon>
        <taxon>Nitratidesulfovibrio</taxon>
    </lineage>
</organism>
<dbReference type="EC" id="7.6.2.-" evidence="1"/>
<dbReference type="EMBL" id="AE017285">
    <property type="protein sequence ID" value="AAS96847.1"/>
    <property type="molecule type" value="Genomic_DNA"/>
</dbReference>
<dbReference type="RefSeq" id="WP_010939647.1">
    <property type="nucleotide sequence ID" value="NC_002937.3"/>
</dbReference>
<dbReference type="RefSeq" id="YP_011587.1">
    <property type="nucleotide sequence ID" value="NC_002937.3"/>
</dbReference>
<dbReference type="SMR" id="Q729H7"/>
<dbReference type="STRING" id="882.DVU_2374"/>
<dbReference type="PaxDb" id="882-DVU_2374"/>
<dbReference type="EnsemblBacteria" id="AAS96847">
    <property type="protein sequence ID" value="AAS96847"/>
    <property type="gene ID" value="DVU_2374"/>
</dbReference>
<dbReference type="KEGG" id="dvu:DVU_2374"/>
<dbReference type="PATRIC" id="fig|882.5.peg.2148"/>
<dbReference type="eggNOG" id="COG1136">
    <property type="taxonomic scope" value="Bacteria"/>
</dbReference>
<dbReference type="HOGENOM" id="CLU_000604_1_22_7"/>
<dbReference type="OrthoDB" id="9809450at2"/>
<dbReference type="PhylomeDB" id="Q729H7"/>
<dbReference type="Proteomes" id="UP000002194">
    <property type="component" value="Chromosome"/>
</dbReference>
<dbReference type="GO" id="GO:0005886">
    <property type="term" value="C:plasma membrane"/>
    <property type="evidence" value="ECO:0007669"/>
    <property type="project" value="UniProtKB-SubCell"/>
</dbReference>
<dbReference type="GO" id="GO:0005524">
    <property type="term" value="F:ATP binding"/>
    <property type="evidence" value="ECO:0007669"/>
    <property type="project" value="UniProtKB-KW"/>
</dbReference>
<dbReference type="GO" id="GO:0016887">
    <property type="term" value="F:ATP hydrolysis activity"/>
    <property type="evidence" value="ECO:0007669"/>
    <property type="project" value="InterPro"/>
</dbReference>
<dbReference type="GO" id="GO:0022857">
    <property type="term" value="F:transmembrane transporter activity"/>
    <property type="evidence" value="ECO:0007669"/>
    <property type="project" value="TreeGrafter"/>
</dbReference>
<dbReference type="GO" id="GO:0044874">
    <property type="term" value="P:lipoprotein localization to outer membrane"/>
    <property type="evidence" value="ECO:0007669"/>
    <property type="project" value="TreeGrafter"/>
</dbReference>
<dbReference type="GO" id="GO:0089705">
    <property type="term" value="P:protein localization to outer membrane"/>
    <property type="evidence" value="ECO:0007669"/>
    <property type="project" value="TreeGrafter"/>
</dbReference>
<dbReference type="CDD" id="cd03255">
    <property type="entry name" value="ABC_MJ0796_LolCDE_FtsE"/>
    <property type="match status" value="1"/>
</dbReference>
<dbReference type="FunFam" id="3.40.50.300:FF:000032">
    <property type="entry name" value="Export ABC transporter ATP-binding protein"/>
    <property type="match status" value="1"/>
</dbReference>
<dbReference type="Gene3D" id="3.40.50.300">
    <property type="entry name" value="P-loop containing nucleotide triphosphate hydrolases"/>
    <property type="match status" value="1"/>
</dbReference>
<dbReference type="InterPro" id="IPR003593">
    <property type="entry name" value="AAA+_ATPase"/>
</dbReference>
<dbReference type="InterPro" id="IPR003439">
    <property type="entry name" value="ABC_transporter-like_ATP-bd"/>
</dbReference>
<dbReference type="InterPro" id="IPR017871">
    <property type="entry name" value="ABC_transporter-like_CS"/>
</dbReference>
<dbReference type="InterPro" id="IPR015854">
    <property type="entry name" value="ABC_transpr_LolD-like"/>
</dbReference>
<dbReference type="InterPro" id="IPR017911">
    <property type="entry name" value="MacB-like_ATP-bd"/>
</dbReference>
<dbReference type="InterPro" id="IPR027417">
    <property type="entry name" value="P-loop_NTPase"/>
</dbReference>
<dbReference type="PANTHER" id="PTHR24220">
    <property type="entry name" value="IMPORT ATP-BINDING PROTEIN"/>
    <property type="match status" value="1"/>
</dbReference>
<dbReference type="PANTHER" id="PTHR24220:SF689">
    <property type="entry name" value="LIPOPROTEIN-RELEASING SYSTEM ATP-BINDING PROTEIN LOLD"/>
    <property type="match status" value="1"/>
</dbReference>
<dbReference type="Pfam" id="PF00005">
    <property type="entry name" value="ABC_tran"/>
    <property type="match status" value="1"/>
</dbReference>
<dbReference type="SMART" id="SM00382">
    <property type="entry name" value="AAA"/>
    <property type="match status" value="1"/>
</dbReference>
<dbReference type="SUPFAM" id="SSF52540">
    <property type="entry name" value="P-loop containing nucleoside triphosphate hydrolases"/>
    <property type="match status" value="1"/>
</dbReference>
<dbReference type="PROSITE" id="PS00211">
    <property type="entry name" value="ABC_TRANSPORTER_1"/>
    <property type="match status" value="1"/>
</dbReference>
<dbReference type="PROSITE" id="PS50893">
    <property type="entry name" value="ABC_TRANSPORTER_2"/>
    <property type="match status" value="1"/>
</dbReference>
<dbReference type="PROSITE" id="PS51244">
    <property type="entry name" value="LOLD"/>
    <property type="match status" value="1"/>
</dbReference>